<comment type="function">
    <text evidence="1">Catalyzes the conversion of glucosamine-6-phosphate to glucosamine-1-phosphate.</text>
</comment>
<comment type="catalytic activity">
    <reaction evidence="1">
        <text>alpha-D-glucosamine 1-phosphate = D-glucosamine 6-phosphate</text>
        <dbReference type="Rhea" id="RHEA:23424"/>
        <dbReference type="ChEBI" id="CHEBI:58516"/>
        <dbReference type="ChEBI" id="CHEBI:58725"/>
        <dbReference type="EC" id="5.4.2.10"/>
    </reaction>
</comment>
<comment type="cofactor">
    <cofactor evidence="1">
        <name>Mg(2+)</name>
        <dbReference type="ChEBI" id="CHEBI:18420"/>
    </cofactor>
    <text evidence="1">Binds 1 Mg(2+) ion per subunit.</text>
</comment>
<comment type="PTM">
    <text evidence="1">Activated by phosphorylation.</text>
</comment>
<comment type="similarity">
    <text evidence="1">Belongs to the phosphohexose mutase family.</text>
</comment>
<comment type="sequence caution" evidence="2">
    <conflict type="erroneous initiation">
        <sequence resource="EMBL-CDS" id="BAA30310"/>
    </conflict>
</comment>
<sequence>MGRYFGTSGIREVVNEKLTPELALKVGLALGTYLQEGKVVIGCDTRTSSVMLKNAVISGLLATGIDVIDIGLAPTPLTGFAIRLYNAEAGVTITASHNPPQYNGIKVWDRDGMAYTPDKEHELEKIIESGNFRRVPWNEVGTLKTANPRKEYIEAILREINLKGSYTVVIDAGNGAGSIVSPYLHRELGNRVITLNSDPSGFFVRELEPNKESLSMLEKTVKVLNADIGIAHDGDADRVGVVDENGEFVEYEVMLSLIAGYMLKKYGKGKIVTTVDAGFALDDYIRELGGEVVRTRVGDVAVAEELVKHGGVFGGEPSGTWIMPQWNLTPDGIFASALVLEMIDRLGPIGELAKDVPKYVTLRKKIPCSNELKNKVMNKIADLIPREFSYERIITIDGIRIENDDWWILFRPSGTEPIMRITLEAHTEEMAERLMKKAENLVKSVIKDLSS</sequence>
<accession>O58973</accession>
<evidence type="ECO:0000255" key="1">
    <source>
        <dbReference type="HAMAP-Rule" id="MF_01554"/>
    </source>
</evidence>
<evidence type="ECO:0000305" key="2"/>
<protein>
    <recommendedName>
        <fullName evidence="1">Probable phosphoglucosamine mutase</fullName>
        <ecNumber evidence="1">5.4.2.10</ecNumber>
    </recommendedName>
</protein>
<reference key="1">
    <citation type="journal article" date="1998" name="DNA Res.">
        <title>Complete sequence and gene organization of the genome of a hyper-thermophilic archaebacterium, Pyrococcus horikoshii OT3.</title>
        <authorList>
            <person name="Kawarabayasi Y."/>
            <person name="Sawada M."/>
            <person name="Horikawa H."/>
            <person name="Haikawa Y."/>
            <person name="Hino Y."/>
            <person name="Yamamoto S."/>
            <person name="Sekine M."/>
            <person name="Baba S."/>
            <person name="Kosugi H."/>
            <person name="Hosoyama A."/>
            <person name="Nagai Y."/>
            <person name="Sakai M."/>
            <person name="Ogura K."/>
            <person name="Otsuka R."/>
            <person name="Nakazawa H."/>
            <person name="Takamiya M."/>
            <person name="Ohfuku Y."/>
            <person name="Funahashi T."/>
            <person name="Tanaka T."/>
            <person name="Kudoh Y."/>
            <person name="Yamazaki J."/>
            <person name="Kushida N."/>
            <person name="Oguchi A."/>
            <person name="Aoki K."/>
            <person name="Yoshizawa T."/>
            <person name="Nakamura Y."/>
            <person name="Robb F.T."/>
            <person name="Horikoshi K."/>
            <person name="Masuchi Y."/>
            <person name="Shizuya H."/>
            <person name="Kikuchi H."/>
        </authorList>
    </citation>
    <scope>NUCLEOTIDE SEQUENCE [LARGE SCALE GENOMIC DNA]</scope>
    <source>
        <strain>ATCC 700860 / DSM 12428 / JCM 9974 / NBRC 100139 / OT-3</strain>
    </source>
</reference>
<gene>
    <name evidence="1" type="primary">glmM</name>
    <name type="ordered locus">PH1210</name>
</gene>
<name>GLMM_PYRHO</name>
<keyword id="KW-0413">Isomerase</keyword>
<keyword id="KW-0460">Magnesium</keyword>
<keyword id="KW-0479">Metal-binding</keyword>
<keyword id="KW-0597">Phosphoprotein</keyword>
<organism>
    <name type="scientific">Pyrococcus horikoshii (strain ATCC 700860 / DSM 12428 / JCM 9974 / NBRC 100139 / OT-3)</name>
    <dbReference type="NCBI Taxonomy" id="70601"/>
    <lineage>
        <taxon>Archaea</taxon>
        <taxon>Methanobacteriati</taxon>
        <taxon>Methanobacteriota</taxon>
        <taxon>Thermococci</taxon>
        <taxon>Thermococcales</taxon>
        <taxon>Thermococcaceae</taxon>
        <taxon>Pyrococcus</taxon>
    </lineage>
</organism>
<feature type="chain" id="PRO_0000337824" description="Probable phosphoglucosamine mutase">
    <location>
        <begin position="1"/>
        <end position="451"/>
    </location>
</feature>
<feature type="active site" description="Phosphoserine intermediate" evidence="1">
    <location>
        <position position="96"/>
    </location>
</feature>
<feature type="binding site" description="via phosphate group" evidence="1">
    <location>
        <position position="96"/>
    </location>
    <ligand>
        <name>Mg(2+)</name>
        <dbReference type="ChEBI" id="CHEBI:18420"/>
    </ligand>
</feature>
<feature type="binding site" evidence="1">
    <location>
        <position position="233"/>
    </location>
    <ligand>
        <name>Mg(2+)</name>
        <dbReference type="ChEBI" id="CHEBI:18420"/>
    </ligand>
</feature>
<feature type="binding site" evidence="1">
    <location>
        <position position="235"/>
    </location>
    <ligand>
        <name>Mg(2+)</name>
        <dbReference type="ChEBI" id="CHEBI:18420"/>
    </ligand>
</feature>
<feature type="binding site" evidence="1">
    <location>
        <position position="237"/>
    </location>
    <ligand>
        <name>Mg(2+)</name>
        <dbReference type="ChEBI" id="CHEBI:18420"/>
    </ligand>
</feature>
<feature type="modified residue" description="Phosphoserine" evidence="1">
    <location>
        <position position="96"/>
    </location>
</feature>
<dbReference type="EC" id="5.4.2.10" evidence="1"/>
<dbReference type="EMBL" id="BA000001">
    <property type="protein sequence ID" value="BAA30310.1"/>
    <property type="status" value="ALT_INIT"/>
    <property type="molecule type" value="Genomic_DNA"/>
</dbReference>
<dbReference type="PIR" id="D71064">
    <property type="entry name" value="D71064"/>
</dbReference>
<dbReference type="RefSeq" id="WP_048053334.1">
    <property type="nucleotide sequence ID" value="NC_000961.1"/>
</dbReference>
<dbReference type="SMR" id="O58973"/>
<dbReference type="STRING" id="70601.gene:9378172"/>
<dbReference type="EnsemblBacteria" id="BAA30310">
    <property type="protein sequence ID" value="BAA30310"/>
    <property type="gene ID" value="BAA30310"/>
</dbReference>
<dbReference type="GeneID" id="1443531"/>
<dbReference type="KEGG" id="pho:PH1210"/>
<dbReference type="eggNOG" id="arCOG00767">
    <property type="taxonomic scope" value="Archaea"/>
</dbReference>
<dbReference type="OrthoDB" id="10363at2157"/>
<dbReference type="Proteomes" id="UP000000752">
    <property type="component" value="Chromosome"/>
</dbReference>
<dbReference type="GO" id="GO:0000287">
    <property type="term" value="F:magnesium ion binding"/>
    <property type="evidence" value="ECO:0007669"/>
    <property type="project" value="UniProtKB-UniRule"/>
</dbReference>
<dbReference type="GO" id="GO:0008966">
    <property type="term" value="F:phosphoglucosamine mutase activity"/>
    <property type="evidence" value="ECO:0007669"/>
    <property type="project" value="UniProtKB-UniRule"/>
</dbReference>
<dbReference type="GO" id="GO:0005975">
    <property type="term" value="P:carbohydrate metabolic process"/>
    <property type="evidence" value="ECO:0007669"/>
    <property type="project" value="InterPro"/>
</dbReference>
<dbReference type="CDD" id="cd03087">
    <property type="entry name" value="PGM_like1"/>
    <property type="match status" value="1"/>
</dbReference>
<dbReference type="FunFam" id="3.40.120.10:FF:000001">
    <property type="entry name" value="Phosphoglucosamine mutase"/>
    <property type="match status" value="1"/>
</dbReference>
<dbReference type="FunFam" id="3.40.120.10:FF:000002">
    <property type="entry name" value="Phosphoglucosamine mutase"/>
    <property type="match status" value="1"/>
</dbReference>
<dbReference type="FunFam" id="3.30.310.50:FF:000009">
    <property type="entry name" value="Probable phosphoglucosamine mutase"/>
    <property type="match status" value="1"/>
</dbReference>
<dbReference type="Gene3D" id="3.40.120.10">
    <property type="entry name" value="Alpha-D-Glucose-1,6-Bisphosphate, subunit A, domain 3"/>
    <property type="match status" value="3"/>
</dbReference>
<dbReference type="Gene3D" id="3.30.310.50">
    <property type="entry name" value="Alpha-D-phosphohexomutase, C-terminal domain"/>
    <property type="match status" value="1"/>
</dbReference>
<dbReference type="HAMAP" id="MF_01554_A">
    <property type="entry name" value="GlmM_A"/>
    <property type="match status" value="1"/>
</dbReference>
<dbReference type="InterPro" id="IPR005844">
    <property type="entry name" value="A-D-PHexomutase_a/b/a-I"/>
</dbReference>
<dbReference type="InterPro" id="IPR016055">
    <property type="entry name" value="A-D-PHexomutase_a/b/a-I/II/III"/>
</dbReference>
<dbReference type="InterPro" id="IPR005845">
    <property type="entry name" value="A-D-PHexomutase_a/b/a-II"/>
</dbReference>
<dbReference type="InterPro" id="IPR005846">
    <property type="entry name" value="A-D-PHexomutase_a/b/a-III"/>
</dbReference>
<dbReference type="InterPro" id="IPR005843">
    <property type="entry name" value="A-D-PHexomutase_C"/>
</dbReference>
<dbReference type="InterPro" id="IPR036900">
    <property type="entry name" value="A-D-PHexomutase_C_sf"/>
</dbReference>
<dbReference type="InterPro" id="IPR016066">
    <property type="entry name" value="A-D-PHexomutase_CS"/>
</dbReference>
<dbReference type="InterPro" id="IPR005841">
    <property type="entry name" value="Alpha-D-phosphohexomutase_SF"/>
</dbReference>
<dbReference type="InterPro" id="IPR023666">
    <property type="entry name" value="GlmM_arc"/>
</dbReference>
<dbReference type="InterPro" id="IPR024086">
    <property type="entry name" value="GlmM_arc-type"/>
</dbReference>
<dbReference type="NCBIfam" id="TIGR03990">
    <property type="entry name" value="Arch_GlmM"/>
    <property type="match status" value="1"/>
</dbReference>
<dbReference type="PANTHER" id="PTHR43771">
    <property type="entry name" value="PHOSPHOMANNOMUTASE"/>
    <property type="match status" value="1"/>
</dbReference>
<dbReference type="PANTHER" id="PTHR43771:SF1">
    <property type="entry name" value="PHOSPHOMANNOMUTASE"/>
    <property type="match status" value="1"/>
</dbReference>
<dbReference type="Pfam" id="PF02878">
    <property type="entry name" value="PGM_PMM_I"/>
    <property type="match status" value="1"/>
</dbReference>
<dbReference type="Pfam" id="PF02879">
    <property type="entry name" value="PGM_PMM_II"/>
    <property type="match status" value="1"/>
</dbReference>
<dbReference type="Pfam" id="PF02880">
    <property type="entry name" value="PGM_PMM_III"/>
    <property type="match status" value="1"/>
</dbReference>
<dbReference type="Pfam" id="PF00408">
    <property type="entry name" value="PGM_PMM_IV"/>
    <property type="match status" value="1"/>
</dbReference>
<dbReference type="PRINTS" id="PR00509">
    <property type="entry name" value="PGMPMM"/>
</dbReference>
<dbReference type="SUPFAM" id="SSF55957">
    <property type="entry name" value="Phosphoglucomutase, C-terminal domain"/>
    <property type="match status" value="1"/>
</dbReference>
<dbReference type="SUPFAM" id="SSF53738">
    <property type="entry name" value="Phosphoglucomutase, first 3 domains"/>
    <property type="match status" value="3"/>
</dbReference>
<dbReference type="PROSITE" id="PS00710">
    <property type="entry name" value="PGM_PMM"/>
    <property type="match status" value="1"/>
</dbReference>
<proteinExistence type="inferred from homology"/>